<evidence type="ECO:0000250" key="1">
    <source>
        <dbReference type="UniProtKB" id="Q8WXC6"/>
    </source>
</evidence>
<evidence type="ECO:0000305" key="2"/>
<keyword id="KW-0963">Cytoplasm</keyword>
<keyword id="KW-0539">Nucleus</keyword>
<keyword id="KW-1185">Reference proteome</keyword>
<keyword id="KW-0736">Signalosome</keyword>
<protein>
    <recommendedName>
        <fullName evidence="2">COP9 signalosome complex subunit 9</fullName>
    </recommendedName>
</protein>
<feature type="chain" id="PRO_0000332928" description="COP9 signalosome complex subunit 9">
    <location>
        <begin position="1"/>
        <end position="57"/>
    </location>
</feature>
<name>CSN9_XENTR</name>
<comment type="function">
    <text evidence="1">Component of the COP9 signalosome complex (CSN), a complex involved in various cellular and developmental processes. The CSN complex is an essential regulator of the ubiquitin (Ubl) conjugation pathway by mediating the deneddylation of the cullin subunits of SCF-type E3 ligase complexes, leading to decrease the Ubl ligase activity. May play a role in cell proliferation.</text>
</comment>
<comment type="subunit">
    <text evidence="1">Component of the CSN complex, probably composed of cops1, cops2, cops3, cops4, cops5, cops6, cops7, cops8 and cops9.</text>
</comment>
<comment type="subcellular location">
    <subcellularLocation>
        <location evidence="1">Nucleus</location>
    </subcellularLocation>
    <subcellularLocation>
        <location evidence="1">Cytoplasm</location>
    </subcellularLocation>
    <subcellularLocation>
        <location evidence="1">Nucleus</location>
        <location evidence="1">Nucleoplasm</location>
    </subcellularLocation>
</comment>
<comment type="similarity">
    <text evidence="2">Belongs to the CSN9 family.</text>
</comment>
<gene>
    <name evidence="1" type="primary">cops9</name>
    <name type="synonym">myeov2</name>
    <name type="ORF">TGas041d06.1</name>
</gene>
<organism>
    <name type="scientific">Xenopus tropicalis</name>
    <name type="common">Western clawed frog</name>
    <name type="synonym">Silurana tropicalis</name>
    <dbReference type="NCBI Taxonomy" id="8364"/>
    <lineage>
        <taxon>Eukaryota</taxon>
        <taxon>Metazoa</taxon>
        <taxon>Chordata</taxon>
        <taxon>Craniata</taxon>
        <taxon>Vertebrata</taxon>
        <taxon>Euteleostomi</taxon>
        <taxon>Amphibia</taxon>
        <taxon>Batrachia</taxon>
        <taxon>Anura</taxon>
        <taxon>Pipoidea</taxon>
        <taxon>Pipidae</taxon>
        <taxon>Xenopodinae</taxon>
        <taxon>Xenopus</taxon>
        <taxon>Silurana</taxon>
    </lineage>
</organism>
<sequence length="57" mass="6225">MKPAVDEMFPEGAGPYVDLDEAGGSTGLLMDLAANEKAVHADFFNDFEDLFDDEDIQ</sequence>
<accession>Q6DDA3</accession>
<reference key="1">
    <citation type="submission" date="2006-10" db="EMBL/GenBank/DDBJ databases">
        <authorList>
            <consortium name="Sanger Xenopus tropicalis EST/cDNA project"/>
        </authorList>
    </citation>
    <scope>NUCLEOTIDE SEQUENCE [LARGE SCALE MRNA]</scope>
    <source>
        <tissue>Gastrula</tissue>
    </source>
</reference>
<reference key="2">
    <citation type="submission" date="2004-07" db="EMBL/GenBank/DDBJ databases">
        <authorList>
            <consortium name="NIH - Xenopus Gene Collection (XGC) project"/>
        </authorList>
    </citation>
    <scope>NUCLEOTIDE SEQUENCE [LARGE SCALE MRNA]</scope>
    <source>
        <tissue>Embryo</tissue>
    </source>
</reference>
<dbReference type="EMBL" id="CR761705">
    <property type="protein sequence ID" value="CAJ83875.1"/>
    <property type="molecule type" value="mRNA"/>
</dbReference>
<dbReference type="EMBL" id="BC077691">
    <property type="protein sequence ID" value="AAH77691.1"/>
    <property type="molecule type" value="mRNA"/>
</dbReference>
<dbReference type="RefSeq" id="NP_001005143.1">
    <property type="nucleotide sequence ID" value="NM_001005143.1"/>
</dbReference>
<dbReference type="FunCoup" id="Q6DDA3">
    <property type="interactions" value="1510"/>
</dbReference>
<dbReference type="STRING" id="8364.ENSXETP00000029333"/>
<dbReference type="PaxDb" id="8364-ENSXETP00000056275"/>
<dbReference type="GeneID" id="448732"/>
<dbReference type="KEGG" id="xtr:448732"/>
<dbReference type="AGR" id="Xenbase:XB-GENE-6492292"/>
<dbReference type="CTD" id="150678"/>
<dbReference type="Xenbase" id="XB-GENE-6492292">
    <property type="gene designation" value="cops9"/>
</dbReference>
<dbReference type="eggNOG" id="ENOG502S7KZ">
    <property type="taxonomic scope" value="Eukaryota"/>
</dbReference>
<dbReference type="HOGENOM" id="CLU_191079_0_0_1"/>
<dbReference type="InParanoid" id="Q6DDA3"/>
<dbReference type="OMA" id="NACAWIL"/>
<dbReference type="OrthoDB" id="9972368at2759"/>
<dbReference type="PhylomeDB" id="Q6DDA3"/>
<dbReference type="TreeFam" id="TF323869"/>
<dbReference type="Proteomes" id="UP000008143">
    <property type="component" value="Chromosome 5"/>
</dbReference>
<dbReference type="Bgee" id="ENSXETG00000026806">
    <property type="expression patterns" value="Expressed in testis and 13 other cell types or tissues"/>
</dbReference>
<dbReference type="GO" id="GO:0000785">
    <property type="term" value="C:chromatin"/>
    <property type="evidence" value="ECO:0000250"/>
    <property type="project" value="UniProtKB"/>
</dbReference>
<dbReference type="GO" id="GO:0008180">
    <property type="term" value="C:COP9 signalosome"/>
    <property type="evidence" value="ECO:0000250"/>
    <property type="project" value="UniProtKB"/>
</dbReference>
<dbReference type="GO" id="GO:0005737">
    <property type="term" value="C:cytoplasm"/>
    <property type="evidence" value="ECO:0000250"/>
    <property type="project" value="UniProtKB"/>
</dbReference>
<dbReference type="GO" id="GO:0005654">
    <property type="term" value="C:nucleoplasm"/>
    <property type="evidence" value="ECO:0000250"/>
    <property type="project" value="UniProtKB"/>
</dbReference>
<dbReference type="GO" id="GO:0005634">
    <property type="term" value="C:nucleus"/>
    <property type="evidence" value="ECO:0000250"/>
    <property type="project" value="UniProtKB"/>
</dbReference>
<dbReference type="GO" id="GO:0034644">
    <property type="term" value="P:cellular response to UV"/>
    <property type="evidence" value="ECO:0000250"/>
    <property type="project" value="UniProtKB"/>
</dbReference>
<dbReference type="GO" id="GO:0008284">
    <property type="term" value="P:positive regulation of cell population proliferation"/>
    <property type="evidence" value="ECO:0000250"/>
    <property type="project" value="UniProtKB"/>
</dbReference>
<dbReference type="InterPro" id="IPR029391">
    <property type="entry name" value="CSN9_metazoa"/>
</dbReference>
<dbReference type="PANTHER" id="PTHR28562">
    <property type="entry name" value="COP9 SIGNALOSOME COMPLEX SUBUNIT 9"/>
    <property type="match status" value="1"/>
</dbReference>
<dbReference type="Pfam" id="PF15004">
    <property type="entry name" value="MYEOV2"/>
    <property type="match status" value="1"/>
</dbReference>
<proteinExistence type="inferred from homology"/>